<proteinExistence type="inferred from homology"/>
<accession>A8GJ12</accession>
<comment type="similarity">
    <text evidence="1">Belongs to the UPF0231 family.</text>
</comment>
<evidence type="ECO:0000255" key="1">
    <source>
        <dbReference type="HAMAP-Rule" id="MF_01053"/>
    </source>
</evidence>
<sequence>MDYEFLRDVTGQVIVRFSMGHEVIGHWINEELKGDFNLLDRIEAGAAEVKGSERQWQLEGHEYTLLMDGEEVMIRANLLEFEGEEMEEGMNYYDEESLSFCGVEDFLQVLKAYRSFMLKY</sequence>
<organism>
    <name type="scientific">Serratia proteamaculans (strain 568)</name>
    <dbReference type="NCBI Taxonomy" id="399741"/>
    <lineage>
        <taxon>Bacteria</taxon>
        <taxon>Pseudomonadati</taxon>
        <taxon>Pseudomonadota</taxon>
        <taxon>Gammaproteobacteria</taxon>
        <taxon>Enterobacterales</taxon>
        <taxon>Yersiniaceae</taxon>
        <taxon>Serratia</taxon>
    </lineage>
</organism>
<dbReference type="EMBL" id="CP000826">
    <property type="protein sequence ID" value="ABV43102.1"/>
    <property type="molecule type" value="Genomic_DNA"/>
</dbReference>
<dbReference type="STRING" id="399741.Spro_4007"/>
<dbReference type="KEGG" id="spe:Spro_4007"/>
<dbReference type="eggNOG" id="COG3112">
    <property type="taxonomic scope" value="Bacteria"/>
</dbReference>
<dbReference type="HOGENOM" id="CLU_139226_0_0_6"/>
<dbReference type="OrthoDB" id="5739292at2"/>
<dbReference type="HAMAP" id="MF_01053">
    <property type="entry name" value="UPF0231"/>
    <property type="match status" value="1"/>
</dbReference>
<dbReference type="InterPro" id="IPR008249">
    <property type="entry name" value="UPF0231"/>
</dbReference>
<dbReference type="NCBIfam" id="NF003574">
    <property type="entry name" value="PRK05248.1-1"/>
    <property type="match status" value="1"/>
</dbReference>
<dbReference type="NCBIfam" id="NF003576">
    <property type="entry name" value="PRK05248.1-3"/>
    <property type="match status" value="1"/>
</dbReference>
<dbReference type="Pfam" id="PF06062">
    <property type="entry name" value="UPF0231"/>
    <property type="match status" value="1"/>
</dbReference>
<dbReference type="PIRSF" id="PIRSF006287">
    <property type="entry name" value="UCP006287"/>
    <property type="match status" value="1"/>
</dbReference>
<name>Y4007_SERP5</name>
<reference key="1">
    <citation type="submission" date="2007-09" db="EMBL/GenBank/DDBJ databases">
        <title>Complete sequence of chromosome of Serratia proteamaculans 568.</title>
        <authorList>
            <consortium name="US DOE Joint Genome Institute"/>
            <person name="Copeland A."/>
            <person name="Lucas S."/>
            <person name="Lapidus A."/>
            <person name="Barry K."/>
            <person name="Glavina del Rio T."/>
            <person name="Dalin E."/>
            <person name="Tice H."/>
            <person name="Pitluck S."/>
            <person name="Chain P."/>
            <person name="Malfatti S."/>
            <person name="Shin M."/>
            <person name="Vergez L."/>
            <person name="Schmutz J."/>
            <person name="Larimer F."/>
            <person name="Land M."/>
            <person name="Hauser L."/>
            <person name="Kyrpides N."/>
            <person name="Kim E."/>
            <person name="Taghavi S."/>
            <person name="Newman L."/>
            <person name="Vangronsveld J."/>
            <person name="van der Lelie D."/>
            <person name="Richardson P."/>
        </authorList>
    </citation>
    <scope>NUCLEOTIDE SEQUENCE [LARGE SCALE GENOMIC DNA]</scope>
    <source>
        <strain>568</strain>
    </source>
</reference>
<protein>
    <recommendedName>
        <fullName evidence="1">UPF0231 protein Spro_4007</fullName>
    </recommendedName>
</protein>
<feature type="chain" id="PRO_1000064365" description="UPF0231 protein Spro_4007">
    <location>
        <begin position="1"/>
        <end position="120"/>
    </location>
</feature>
<gene>
    <name type="ordered locus">Spro_4007</name>
</gene>